<evidence type="ECO:0000269" key="1">
    <source>
    </source>
</evidence>
<evidence type="ECO:0000269" key="2">
    <source>
    </source>
</evidence>
<evidence type="ECO:0000269" key="3">
    <source>
    </source>
</evidence>
<evidence type="ECO:0000303" key="4">
    <source>
    </source>
</evidence>
<evidence type="ECO:0000305" key="5"/>
<sequence length="185" mass="21235">MFPLNFHYEDVLRQDLLLKLNYANVMEVPGLCEIRVVPKAPYNFIIKNGKLAMEIPCGQKFIQTQRGSTGKSFRSNPFLGSNKDKGYVSDLARQSTLRGHGMSNFLVRILTVMSLLDFPVEIRKNSIQFSMETEFCEFSPELEDHFEIFEHIRGFNVTIITSANTQDETLLLWSGFLQKDEGETQ</sequence>
<feature type="chain" id="PRO_0000125073" description="Large ribosomal subunit protein uL5m">
    <location>
        <begin position="1"/>
        <end position="185"/>
    </location>
</feature>
<feature type="sequence conflict" description="In Ref. 7; CAA46239." evidence="5" ref="7">
    <original>ARQSTLR</original>
    <variation>STTKHSP</variation>
    <location>
        <begin position="92"/>
        <end position="98"/>
    </location>
</feature>
<proteinExistence type="evidence at protein level"/>
<gene>
    <name type="primary">RPL5</name>
    <name type="ordered locus">AtMg00210</name>
</gene>
<reference key="1">
    <citation type="journal article" date="1993" name="Curr. Genet.">
        <title>An rps14 pseudogene is transcribed and edited in Arabidopsis mitochondria.</title>
        <authorList>
            <person name="Brandt P."/>
            <person name="Unseld M."/>
            <person name="Eckert-Ossenkopp U."/>
            <person name="Brennicke A."/>
        </authorList>
    </citation>
    <scope>NUCLEOTIDE SEQUENCE [GENOMIC DNA]</scope>
    <scope>RNA EDITING</scope>
    <source>
        <strain>cv. Columbia</strain>
    </source>
</reference>
<reference key="2">
    <citation type="journal article" date="1997" name="Nat. Genet.">
        <title>The mitochondrial genome of Arabidopsis thaliana contains 57 genes in 366,924 nucleotides.</title>
        <authorList>
            <person name="Unseld M."/>
            <person name="Marienfeld J.R."/>
            <person name="Brandt P."/>
            <person name="Brennicke A."/>
        </authorList>
    </citation>
    <scope>NUCLEOTIDE SEQUENCE [LARGE SCALE GENOMIC DNA]</scope>
    <source>
        <strain>cv. C24</strain>
    </source>
</reference>
<reference key="3">
    <citation type="journal article" date="1999" name="Proc. Natl. Acad. Sci. U.S.A.">
        <title>RNA editing in Arabidopsis mitochondria effects 441 C to U changes in ORFs.</title>
        <authorList>
            <person name="Giege P."/>
            <person name="Brennicke A."/>
        </authorList>
    </citation>
    <scope>NUCLEOTIDE SEQUENCE [GENOMIC DNA]</scope>
    <scope>RNA EDITING</scope>
</reference>
<reference key="4">
    <citation type="journal article" date="2018" name="Plant Cell">
        <title>Correction of persistent errors in Arabidopsis reference mitochondrial genomes.</title>
        <authorList>
            <person name="Sloan D.B."/>
            <person name="Wu Z."/>
            <person name="Sharbrough J."/>
        </authorList>
    </citation>
    <scope>NUCLEOTIDE SEQUENCE [LARGE SCALE GENOMIC DNA]</scope>
    <scope>RNA EDITING</scope>
    <source>
        <strain>cv. Columbia</strain>
    </source>
</reference>
<reference key="5">
    <citation type="journal article" date="1999" name="Nature">
        <title>Sequence and analysis of chromosome 2 of the plant Arabidopsis thaliana.</title>
        <authorList>
            <person name="Lin X."/>
            <person name="Kaul S."/>
            <person name="Rounsley S.D."/>
            <person name="Shea T.P."/>
            <person name="Benito M.-I."/>
            <person name="Town C.D."/>
            <person name="Fujii C.Y."/>
            <person name="Mason T.M."/>
            <person name="Bowman C.L."/>
            <person name="Barnstead M.E."/>
            <person name="Feldblyum T.V."/>
            <person name="Buell C.R."/>
            <person name="Ketchum K.A."/>
            <person name="Lee J.J."/>
            <person name="Ronning C.M."/>
            <person name="Koo H.L."/>
            <person name="Moffat K.S."/>
            <person name="Cronin L.A."/>
            <person name="Shen M."/>
            <person name="Pai G."/>
            <person name="Van Aken S."/>
            <person name="Umayam L."/>
            <person name="Tallon L.J."/>
            <person name="Gill J.E."/>
            <person name="Adams M.D."/>
            <person name="Carrera A.J."/>
            <person name="Creasy T.H."/>
            <person name="Goodman H.M."/>
            <person name="Somerville C.R."/>
            <person name="Copenhaver G.P."/>
            <person name="Preuss D."/>
            <person name="Nierman W.C."/>
            <person name="White O."/>
            <person name="Eisen J.A."/>
            <person name="Salzberg S.L."/>
            <person name="Fraser C.M."/>
            <person name="Venter J.C."/>
        </authorList>
    </citation>
    <scope>NUCLEOTIDE SEQUENCE [LARGE SCALE GENOMIC DNA] (AT2G07725)</scope>
    <source>
        <strain>cv. Columbia</strain>
    </source>
</reference>
<reference key="6">
    <citation type="submission" date="2003-11" db="EMBL/GenBank/DDBJ databases">
        <title>Arabidopsis cDNA clones.</title>
        <authorList>
            <person name="Shinn P."/>
            <person name="Chen H."/>
            <person name="Cheuk R.F."/>
            <person name="Kim C.J."/>
            <person name="Ecker J.R."/>
        </authorList>
    </citation>
    <scope>NUCLEOTIDE SEQUENCE [LARGE SCALE MRNA] (AT2G07725)</scope>
    <source>
        <strain>cv. Columbia</strain>
    </source>
</reference>
<reference key="7">
    <citation type="journal article" date="1992" name="Plant Mol. Biol.">
        <title>Mitochondrial rps14 is a transcribed and edited pseudogene in Arabidopsis thaliana.</title>
        <authorList>
            <person name="Aubert D."/>
            <person name="Bisanz-Seyer C."/>
            <person name="Herzog M."/>
        </authorList>
    </citation>
    <scope>NUCLEOTIDE SEQUENCE [GENOMIC DNA] OF 92-185</scope>
    <source>
        <strain>cv. Columbia</strain>
    </source>
</reference>
<reference key="8">
    <citation type="journal article" date="2023" name="Plant Cell">
        <title>An updated nomenclature for plant ribosomal protein genes.</title>
        <authorList>
            <person name="Scarpin M.R."/>
            <person name="Busche M."/>
            <person name="Martinez R.E."/>
            <person name="Harper L.C."/>
            <person name="Reiser L."/>
            <person name="Szakonyi D."/>
            <person name="Merchante C."/>
            <person name="Lan T."/>
            <person name="Xiong W."/>
            <person name="Mo B."/>
            <person name="Tang G."/>
            <person name="Chen X."/>
            <person name="Bailey-Serres J."/>
            <person name="Browning K.S."/>
            <person name="Brunkard J.O."/>
        </authorList>
    </citation>
    <scope>NOMENCLATURE</scope>
</reference>
<comment type="subunit">
    <text evidence="5">Component of the mitochondrial ribosome large subunit.</text>
</comment>
<comment type="subcellular location">
    <subcellularLocation>
        <location evidence="4">Mitochondrion</location>
    </subcellularLocation>
</comment>
<comment type="RNA editing">
    <location>
        <position position="12" evidence="1 2 3"/>
    </location>
    <location>
        <position position="16" evidence="1 2 3"/>
    </location>
    <location>
        <position position="20" evidence="1 2 3"/>
    </location>
    <location>
        <position position="22" evidence="1 2 3"/>
    </location>
    <location>
        <position position="31" evidence="1 2 3"/>
    </location>
    <location>
        <position position="57" evidence="1 2 3"/>
    </location>
    <location>
        <position position="106" evidence="1 2 3"/>
    </location>
    <location>
        <position position="110" evidence="1 2 3"/>
    </location>
    <location>
        <position position="171" evidence="1 2 3"/>
    </location>
</comment>
<comment type="miscellaneous">
    <text>A stretch of 270 kb of the mitochondrial genome is duplicated within the centromere of chromosome 2 resulting in the duplication of the gene. The expression of this duplicated gene (At2g07725) is demonstrated.</text>
</comment>
<comment type="similarity">
    <text evidence="5">Belongs to the universal ribosomal protein uL5 family.</text>
</comment>
<accession>P42793</accession>
<accession>A0A2P2CLF8</accession>
<accession>P93288</accession>
<accession>Q33886</accession>
<accession>Q8S8I8</accession>
<protein>
    <recommendedName>
        <fullName evidence="4">Large ribosomal subunit protein uL5m</fullName>
    </recommendedName>
    <alternativeName>
        <fullName>60S ribosomal protein L5, mitochondrial</fullName>
    </alternativeName>
</protein>
<dbReference type="EMBL" id="X67736">
    <property type="protein sequence ID" value="CAA47967.1"/>
    <property type="status" value="ALT_SEQ"/>
    <property type="molecule type" value="Genomic_DNA"/>
</dbReference>
<dbReference type="EMBL" id="Y08501">
    <property type="protein sequence ID" value="CAA69765.3"/>
    <property type="status" value="ALT_SEQ"/>
    <property type="molecule type" value="Genomic_DNA"/>
</dbReference>
<dbReference type="EMBL" id="BK010421">
    <property type="protein sequence ID" value="DAB41507.2"/>
    <property type="molecule type" value="Genomic_DNA"/>
</dbReference>
<dbReference type="EMBL" id="AC006225">
    <property type="protein sequence ID" value="AAM15173.1"/>
    <property type="status" value="ALT_SEQ"/>
    <property type="molecule type" value="Genomic_DNA"/>
</dbReference>
<dbReference type="EMBL" id="BT010679">
    <property type="protein sequence ID" value="AAR20736.1"/>
    <property type="status" value="ALT_SEQ"/>
    <property type="molecule type" value="mRNA"/>
</dbReference>
<dbReference type="EMBL" id="X65123">
    <property type="protein sequence ID" value="CAA46239.1"/>
    <property type="status" value="ALT_SEQ"/>
    <property type="molecule type" value="Genomic_DNA"/>
</dbReference>
<dbReference type="PIR" id="S38959">
    <property type="entry name" value="S38959"/>
</dbReference>
<dbReference type="RefSeq" id="NP_085491.1">
    <property type="nucleotide sequence ID" value="NC_001284.2"/>
</dbReference>
<dbReference type="RefSeq" id="NP_178803.1">
    <property type="nucleotide sequence ID" value="NM_126761.2"/>
</dbReference>
<dbReference type="PDB" id="6XYW">
    <property type="method" value="EM"/>
    <property type="resolution" value="3.86 A"/>
    <property type="chains" value="Ae=1-185"/>
</dbReference>
<dbReference type="PDBsum" id="6XYW"/>
<dbReference type="EMDB" id="EMD-10654"/>
<dbReference type="SMR" id="P42793"/>
<dbReference type="FunCoup" id="P42793">
    <property type="interactions" value="64"/>
</dbReference>
<dbReference type="IntAct" id="P42793">
    <property type="interactions" value="1"/>
</dbReference>
<dbReference type="STRING" id="3702.P42793"/>
<dbReference type="PaxDb" id="3702-AT2G07725.1"/>
<dbReference type="PeptideAtlas" id="P42793"/>
<dbReference type="KEGG" id="ath:AT2G07725"/>
<dbReference type="Araport" id="ATMG00210"/>
<dbReference type="TAIR" id="ATMG00210">
    <property type="gene designation" value="RPL5"/>
</dbReference>
<dbReference type="eggNOG" id="ENOG502QT6Q">
    <property type="taxonomic scope" value="Eukaryota"/>
</dbReference>
<dbReference type="InParanoid" id="P42793"/>
<dbReference type="OrthoDB" id="1908144at2759"/>
<dbReference type="PRO" id="PR:P42793"/>
<dbReference type="Proteomes" id="UP000006548">
    <property type="component" value="Mitochondrion MT"/>
</dbReference>
<dbReference type="ExpressionAtlas" id="P42793">
    <property type="expression patterns" value="baseline"/>
</dbReference>
<dbReference type="GO" id="GO:0022625">
    <property type="term" value="C:cytosolic large ribosomal subunit"/>
    <property type="evidence" value="ECO:0000318"/>
    <property type="project" value="GO_Central"/>
</dbReference>
<dbReference type="GO" id="GO:0005739">
    <property type="term" value="C:mitochondrion"/>
    <property type="evidence" value="ECO:0007669"/>
    <property type="project" value="UniProtKB-SubCell"/>
</dbReference>
<dbReference type="GO" id="GO:0003723">
    <property type="term" value="F:RNA binding"/>
    <property type="evidence" value="ECO:0000318"/>
    <property type="project" value="GO_Central"/>
</dbReference>
<dbReference type="GO" id="GO:0003735">
    <property type="term" value="F:structural constituent of ribosome"/>
    <property type="evidence" value="ECO:0000318"/>
    <property type="project" value="GO_Central"/>
</dbReference>
<dbReference type="GO" id="GO:0006412">
    <property type="term" value="P:translation"/>
    <property type="evidence" value="ECO:0000318"/>
    <property type="project" value="GO_Central"/>
</dbReference>
<dbReference type="FunFam" id="3.30.1440.10:FF:000003">
    <property type="entry name" value="Ribosomal protein L5"/>
    <property type="match status" value="1"/>
</dbReference>
<dbReference type="Gene3D" id="3.30.1440.10">
    <property type="match status" value="1"/>
</dbReference>
<dbReference type="InterPro" id="IPR002132">
    <property type="entry name" value="Ribosomal_uL5"/>
</dbReference>
<dbReference type="InterPro" id="IPR022803">
    <property type="entry name" value="Ribosomal_uL5_dom_sf"/>
</dbReference>
<dbReference type="PANTHER" id="PTHR11994">
    <property type="entry name" value="60S RIBOSOMAL PROTEIN L11-RELATED"/>
    <property type="match status" value="1"/>
</dbReference>
<dbReference type="PIRSF" id="PIRSF002161">
    <property type="entry name" value="Ribosomal_L5"/>
    <property type="match status" value="1"/>
</dbReference>
<dbReference type="SUPFAM" id="SSF55282">
    <property type="entry name" value="RL5-like"/>
    <property type="match status" value="1"/>
</dbReference>
<keyword id="KW-0002">3D-structure</keyword>
<keyword id="KW-0496">Mitochondrion</keyword>
<keyword id="KW-1185">Reference proteome</keyword>
<keyword id="KW-0687">Ribonucleoprotein</keyword>
<keyword id="KW-0689">Ribosomal protein</keyword>
<keyword id="KW-0691">RNA editing</keyword>
<geneLocation type="mitochondrion"/>
<name>RM05_ARATH</name>
<organism>
    <name type="scientific">Arabidopsis thaliana</name>
    <name type="common">Mouse-ear cress</name>
    <dbReference type="NCBI Taxonomy" id="3702"/>
    <lineage>
        <taxon>Eukaryota</taxon>
        <taxon>Viridiplantae</taxon>
        <taxon>Streptophyta</taxon>
        <taxon>Embryophyta</taxon>
        <taxon>Tracheophyta</taxon>
        <taxon>Spermatophyta</taxon>
        <taxon>Magnoliopsida</taxon>
        <taxon>eudicotyledons</taxon>
        <taxon>Gunneridae</taxon>
        <taxon>Pentapetalae</taxon>
        <taxon>rosids</taxon>
        <taxon>malvids</taxon>
        <taxon>Brassicales</taxon>
        <taxon>Brassicaceae</taxon>
        <taxon>Camelineae</taxon>
        <taxon>Arabidopsis</taxon>
    </lineage>
</organism>